<feature type="chain" id="PRO_0000160902" description="Quinone oxidoreductase">
    <location>
        <begin position="1"/>
        <end position="327"/>
    </location>
</feature>
<feature type="sequence conflict" description="In Ref. 2; J03390." evidence="2" ref="2">
    <original>L</original>
    <variation>V</variation>
    <location>
        <position position="92"/>
    </location>
</feature>
<feature type="sequence conflict" description="In Ref. 2; J03390." evidence="2" ref="2">
    <original>A</original>
    <variation>R</variation>
    <location>
        <position position="148"/>
    </location>
</feature>
<dbReference type="EC" id="1.6.5.5"/>
<dbReference type="EMBL" id="AE006468">
    <property type="protein sequence ID" value="AAL23069.1"/>
    <property type="molecule type" value="Genomic_DNA"/>
</dbReference>
<dbReference type="EMBL" id="J03390">
    <property type="status" value="NOT_ANNOTATED_CDS"/>
    <property type="molecule type" value="Genomic_DNA"/>
</dbReference>
<dbReference type="RefSeq" id="NP_463110.1">
    <property type="nucleotide sequence ID" value="NC_003197.2"/>
</dbReference>
<dbReference type="RefSeq" id="WP_000235551.1">
    <property type="nucleotide sequence ID" value="NC_003197.2"/>
</dbReference>
<dbReference type="SMR" id="P40783"/>
<dbReference type="STRING" id="99287.STM4245"/>
<dbReference type="PaxDb" id="99287-STM4245"/>
<dbReference type="GeneID" id="1255771"/>
<dbReference type="KEGG" id="stm:STM4245"/>
<dbReference type="PATRIC" id="fig|99287.12.peg.4465"/>
<dbReference type="HOGENOM" id="CLU_026673_3_1_6"/>
<dbReference type="OMA" id="KGMTAHY"/>
<dbReference type="PhylomeDB" id="P40783"/>
<dbReference type="BioCyc" id="SENT99287:STM4245-MONOMER"/>
<dbReference type="Proteomes" id="UP000001014">
    <property type="component" value="Chromosome"/>
</dbReference>
<dbReference type="GO" id="GO:0005829">
    <property type="term" value="C:cytosol"/>
    <property type="evidence" value="ECO:0000318"/>
    <property type="project" value="GO_Central"/>
</dbReference>
<dbReference type="GO" id="GO:0035925">
    <property type="term" value="F:mRNA 3'-UTR AU-rich region binding"/>
    <property type="evidence" value="ECO:0000318"/>
    <property type="project" value="GO_Central"/>
</dbReference>
<dbReference type="GO" id="GO:0070402">
    <property type="term" value="F:NADPH binding"/>
    <property type="evidence" value="ECO:0000318"/>
    <property type="project" value="GO_Central"/>
</dbReference>
<dbReference type="GO" id="GO:0003960">
    <property type="term" value="F:NADPH:quinone reductase activity"/>
    <property type="evidence" value="ECO:0000318"/>
    <property type="project" value="GO_Central"/>
</dbReference>
<dbReference type="GO" id="GO:0008270">
    <property type="term" value="F:zinc ion binding"/>
    <property type="evidence" value="ECO:0007669"/>
    <property type="project" value="InterPro"/>
</dbReference>
<dbReference type="CDD" id="cd05286">
    <property type="entry name" value="QOR2"/>
    <property type="match status" value="1"/>
</dbReference>
<dbReference type="FunFam" id="3.40.50.720:FF:000053">
    <property type="entry name" value="Quinone oxidoreductase 1"/>
    <property type="match status" value="1"/>
</dbReference>
<dbReference type="Gene3D" id="3.90.180.10">
    <property type="entry name" value="Medium-chain alcohol dehydrogenases, catalytic domain"/>
    <property type="match status" value="1"/>
</dbReference>
<dbReference type="Gene3D" id="3.40.50.720">
    <property type="entry name" value="NAD(P)-binding Rossmann-like Domain"/>
    <property type="match status" value="1"/>
</dbReference>
<dbReference type="InterPro" id="IPR013149">
    <property type="entry name" value="ADH-like_C"/>
</dbReference>
<dbReference type="InterPro" id="IPR013154">
    <property type="entry name" value="ADH-like_N"/>
</dbReference>
<dbReference type="InterPro" id="IPR011032">
    <property type="entry name" value="GroES-like_sf"/>
</dbReference>
<dbReference type="InterPro" id="IPR036291">
    <property type="entry name" value="NAD(P)-bd_dom_sf"/>
</dbReference>
<dbReference type="InterPro" id="IPR020843">
    <property type="entry name" value="PKS_ER"/>
</dbReference>
<dbReference type="InterPro" id="IPR047618">
    <property type="entry name" value="QOR-like"/>
</dbReference>
<dbReference type="InterPro" id="IPR002364">
    <property type="entry name" value="Quin_OxRdtase/zeta-crystal_CS"/>
</dbReference>
<dbReference type="NCBIfam" id="NF008024">
    <property type="entry name" value="PRK10754.1"/>
    <property type="match status" value="1"/>
</dbReference>
<dbReference type="PANTHER" id="PTHR48106">
    <property type="entry name" value="QUINONE OXIDOREDUCTASE PIG3-RELATED"/>
    <property type="match status" value="1"/>
</dbReference>
<dbReference type="PANTHER" id="PTHR48106:SF13">
    <property type="entry name" value="QUINONE OXIDOREDUCTASE-RELATED"/>
    <property type="match status" value="1"/>
</dbReference>
<dbReference type="Pfam" id="PF08240">
    <property type="entry name" value="ADH_N"/>
    <property type="match status" value="1"/>
</dbReference>
<dbReference type="Pfam" id="PF00107">
    <property type="entry name" value="ADH_zinc_N"/>
    <property type="match status" value="1"/>
</dbReference>
<dbReference type="SMART" id="SM00829">
    <property type="entry name" value="PKS_ER"/>
    <property type="match status" value="1"/>
</dbReference>
<dbReference type="SUPFAM" id="SSF50129">
    <property type="entry name" value="GroES-like"/>
    <property type="match status" value="1"/>
</dbReference>
<dbReference type="SUPFAM" id="SSF51735">
    <property type="entry name" value="NAD(P)-binding Rossmann-fold domains"/>
    <property type="match status" value="1"/>
</dbReference>
<dbReference type="PROSITE" id="PS01162">
    <property type="entry name" value="QOR_ZETA_CRYSTAL"/>
    <property type="match status" value="1"/>
</dbReference>
<gene>
    <name type="primary">qor</name>
    <name type="ordered locus">STM4245</name>
</gene>
<sequence length="327" mass="35151">MATRIEFHKHGGPEVLQTVEFTPAEPAEHEIQVENKAIGINFIDTYIRSGLYPPPSLPAGLGTEAAGVVSKVGNGVEHIRVGDRVVYAQSTLGAYSSVHNVTADKAAILPDAISFEQAAASFLKGLTVFYLLRKTYEVKPDEPFLFHAAAGGVGLIACQWAKALGAKLIGTVGSAQKAQRALDAGAWQVINYREESIVERVKEITGGKKVRVVYDSVGKDTWEASLDCLQRRGLMVSFGNASGPVTGVNLGILNQKGSLYATRPSLQGYITTREELTEASNELFSLIASGVIKVDVAENQRYALKDARRAHEVLESRATQGSSLLIP</sequence>
<keyword id="KW-0521">NADP</keyword>
<keyword id="KW-0560">Oxidoreductase</keyword>
<keyword id="KW-1185">Reference proteome</keyword>
<protein>
    <recommendedName>
        <fullName>Quinone oxidoreductase</fullName>
        <ecNumber>1.6.5.5</ecNumber>
    </recommendedName>
    <alternativeName>
        <fullName>NADPH:quinone reductase</fullName>
    </alternativeName>
    <alternativeName>
        <fullName>Zeta-crystallin homolog protein</fullName>
    </alternativeName>
</protein>
<evidence type="ECO:0000250" key="1"/>
<evidence type="ECO:0000305" key="2"/>
<reference key="1">
    <citation type="journal article" date="2001" name="Nature">
        <title>Complete genome sequence of Salmonella enterica serovar Typhimurium LT2.</title>
        <authorList>
            <person name="McClelland M."/>
            <person name="Sanderson K.E."/>
            <person name="Spieth J."/>
            <person name="Clifton S.W."/>
            <person name="Latreille P."/>
            <person name="Courtney L."/>
            <person name="Porwollik S."/>
            <person name="Ali J."/>
            <person name="Dante M."/>
            <person name="Du F."/>
            <person name="Hou S."/>
            <person name="Layman D."/>
            <person name="Leonard S."/>
            <person name="Nguyen C."/>
            <person name="Scott K."/>
            <person name="Holmes A."/>
            <person name="Grewal N."/>
            <person name="Mulvaney E."/>
            <person name="Ryan E."/>
            <person name="Sun H."/>
            <person name="Florea L."/>
            <person name="Miller W."/>
            <person name="Stoneking T."/>
            <person name="Nhan M."/>
            <person name="Waterston R."/>
            <person name="Wilson R.K."/>
        </authorList>
    </citation>
    <scope>NUCLEOTIDE SEQUENCE [LARGE SCALE GENOMIC DNA]</scope>
    <source>
        <strain>LT2 / SGSC1412 / ATCC 700720</strain>
    </source>
</reference>
<reference key="2">
    <citation type="journal article" date="1988" name="J. Bacteriol.">
        <title>Sequence of the dnaB gene of Salmonella typhimurium.</title>
        <authorList>
            <person name="Wong A."/>
            <person name="Kean L."/>
            <person name="Maurer R."/>
        </authorList>
    </citation>
    <scope>NUCLEOTIDE SEQUENCE [GENOMIC DNA] OF 1-168</scope>
</reference>
<name>QOR_SALTY</name>
<proteinExistence type="inferred from homology"/>
<accession>P40783</accession>
<organism>
    <name type="scientific">Salmonella typhimurium (strain LT2 / SGSC1412 / ATCC 700720)</name>
    <dbReference type="NCBI Taxonomy" id="99287"/>
    <lineage>
        <taxon>Bacteria</taxon>
        <taxon>Pseudomonadati</taxon>
        <taxon>Pseudomonadota</taxon>
        <taxon>Gammaproteobacteria</taxon>
        <taxon>Enterobacterales</taxon>
        <taxon>Enterobacteriaceae</taxon>
        <taxon>Salmonella</taxon>
    </lineage>
</organism>
<comment type="catalytic activity">
    <reaction>
        <text>2 a quinone + NADPH + H(+) = 2 a 1,4-benzosemiquinone + NADP(+)</text>
        <dbReference type="Rhea" id="RHEA:14269"/>
        <dbReference type="ChEBI" id="CHEBI:15378"/>
        <dbReference type="ChEBI" id="CHEBI:57783"/>
        <dbReference type="ChEBI" id="CHEBI:58349"/>
        <dbReference type="ChEBI" id="CHEBI:132124"/>
        <dbReference type="ChEBI" id="CHEBI:134225"/>
        <dbReference type="EC" id="1.6.5.5"/>
    </reaction>
</comment>
<comment type="subunit">
    <text evidence="1">Homodimer.</text>
</comment>
<comment type="similarity">
    <text evidence="2">Belongs to the zinc-containing alcohol dehydrogenase family. Quinone oxidoreductase subfamily.</text>
</comment>